<proteinExistence type="uncertain"/>
<geneLocation type="chloroplast"/>
<accession>Q06FN2</accession>
<keyword id="KW-0150">Chloroplast</keyword>
<keyword id="KW-0240">DNA-directed RNA polymerase</keyword>
<keyword id="KW-0548">Nucleotidyltransferase</keyword>
<keyword id="KW-0934">Plastid</keyword>
<keyword id="KW-0804">Transcription</keyword>
<keyword id="KW-0808">Transferase</keyword>
<protein>
    <recommendedName>
        <fullName>Putative DNA-directed RNA polymerase subunit alpha-like 1</fullName>
        <shortName>Putative PEP 1</shortName>
        <ecNumber>2.7.7.6</ecNumber>
    </recommendedName>
    <alternativeName>
        <fullName>Putative plastid-encoded RNA polymerase subunit alpha 1</fullName>
        <shortName>Putative RNA polymerase subunit alpha 1</shortName>
    </alternativeName>
</protein>
<name>RPAL1_PELHO</name>
<dbReference type="EC" id="2.7.7.6"/>
<dbReference type="EMBL" id="DQ897681">
    <property type="protein sequence ID" value="ABI17299.1"/>
    <property type="molecule type" value="Genomic_DNA"/>
</dbReference>
<dbReference type="EMBL" id="DQ897681">
    <property type="protein sequence ID" value="ABI17341.1"/>
    <property type="molecule type" value="Genomic_DNA"/>
</dbReference>
<dbReference type="RefSeq" id="YP_784107.1">
    <property type="nucleotide sequence ID" value="NC_008454.1"/>
</dbReference>
<dbReference type="RefSeq" id="YP_784149.1">
    <property type="nucleotide sequence ID" value="NC_008454.1"/>
</dbReference>
<dbReference type="SMR" id="Q06FN2"/>
<dbReference type="GeneID" id="4362839"/>
<dbReference type="GeneID" id="4362958"/>
<dbReference type="GO" id="GO:0009507">
    <property type="term" value="C:chloroplast"/>
    <property type="evidence" value="ECO:0007669"/>
    <property type="project" value="UniProtKB-SubCell"/>
</dbReference>
<dbReference type="GO" id="GO:0000428">
    <property type="term" value="C:DNA-directed RNA polymerase complex"/>
    <property type="evidence" value="ECO:0007669"/>
    <property type="project" value="UniProtKB-KW"/>
</dbReference>
<dbReference type="GO" id="GO:0005739">
    <property type="term" value="C:mitochondrion"/>
    <property type="evidence" value="ECO:0007669"/>
    <property type="project" value="GOC"/>
</dbReference>
<dbReference type="GO" id="GO:0003899">
    <property type="term" value="F:DNA-directed RNA polymerase activity"/>
    <property type="evidence" value="ECO:0007669"/>
    <property type="project" value="UniProtKB-EC"/>
</dbReference>
<dbReference type="GO" id="GO:0046983">
    <property type="term" value="F:protein dimerization activity"/>
    <property type="evidence" value="ECO:0007669"/>
    <property type="project" value="InterPro"/>
</dbReference>
<dbReference type="GO" id="GO:0006351">
    <property type="term" value="P:DNA-templated transcription"/>
    <property type="evidence" value="ECO:0007669"/>
    <property type="project" value="InterPro"/>
</dbReference>
<dbReference type="Gene3D" id="2.170.120.12">
    <property type="entry name" value="DNA-directed RNA polymerase, insert domain"/>
    <property type="match status" value="1"/>
</dbReference>
<dbReference type="Gene3D" id="3.30.1360.10">
    <property type="entry name" value="RNA polymerase, RBP11-like subunit"/>
    <property type="match status" value="2"/>
</dbReference>
<dbReference type="InterPro" id="IPR036603">
    <property type="entry name" value="RBP11-like"/>
</dbReference>
<dbReference type="InterPro" id="IPR036643">
    <property type="entry name" value="RNApol_insert_sf"/>
</dbReference>
<dbReference type="SUPFAM" id="SSF56553">
    <property type="entry name" value="Insert subdomain of RNA polymerase alpha subunit"/>
    <property type="match status" value="1"/>
</dbReference>
<dbReference type="SUPFAM" id="SSF55257">
    <property type="entry name" value="RBP11-like subunits of RNA polymerase"/>
    <property type="match status" value="1"/>
</dbReference>
<comment type="function">
    <text evidence="1">DNA-dependent RNA polymerase catalyzes the transcription of DNA into RNA using the four ribonucleoside triphosphates as substrates.</text>
</comment>
<comment type="catalytic activity">
    <reaction>
        <text>RNA(n) + a ribonucleoside 5'-triphosphate = RNA(n+1) + diphosphate</text>
        <dbReference type="Rhea" id="RHEA:21248"/>
        <dbReference type="Rhea" id="RHEA-COMP:14527"/>
        <dbReference type="Rhea" id="RHEA-COMP:17342"/>
        <dbReference type="ChEBI" id="CHEBI:33019"/>
        <dbReference type="ChEBI" id="CHEBI:61557"/>
        <dbReference type="ChEBI" id="CHEBI:140395"/>
        <dbReference type="EC" id="2.7.7.6"/>
    </reaction>
</comment>
<comment type="subunit">
    <text evidence="1">In plastids the minimal PEP RNA polymerase catalytic core is composed of four subunits: alpha, beta, beta', and beta''. When a (nuclear-encoded) sigma factor is associated with the core the holoenzyme is formed, which can initiate transcription (By similarity).</text>
</comment>
<comment type="subcellular location">
    <subcellularLocation>
        <location>Plastid</location>
        <location>Chloroplast</location>
    </subcellularLocation>
</comment>
<comment type="domain">
    <text evidence="1">The N-terminal domain is essential for RNAP assembly and basal transcription, whereas the C-terminal domain is involved in interaction with transcriptional regulators and with upstream promoter elements.</text>
</comment>
<comment type="similarity">
    <text evidence="3">Belongs to the RNA polymerase alpha chain family.</text>
</comment>
<comment type="caution">
    <text evidence="3">Could be the product of a pseudogene. There are 3 rpoA-like genes in this organism (found in the inverted repeat). None of them are convincing as rpoA, and it may be that the functional gene is in the nucleus. This gene however is found in the correct operon context.</text>
</comment>
<organism>
    <name type="scientific">Pelargonium hortorum</name>
    <name type="common">Common geranium</name>
    <name type="synonym">Pelargonium inquinans x Pelargonium zonale</name>
    <dbReference type="NCBI Taxonomy" id="4031"/>
    <lineage>
        <taxon>Eukaryota</taxon>
        <taxon>Viridiplantae</taxon>
        <taxon>Streptophyta</taxon>
        <taxon>Embryophyta</taxon>
        <taxon>Tracheophyta</taxon>
        <taxon>Spermatophyta</taxon>
        <taxon>Magnoliopsida</taxon>
        <taxon>eudicotyledons</taxon>
        <taxon>Gunneridae</taxon>
        <taxon>Pentapetalae</taxon>
        <taxon>rosids</taxon>
        <taxon>malvids</taxon>
        <taxon>Geraniales</taxon>
        <taxon>Geraniaceae</taxon>
        <taxon>Pelargonium</taxon>
    </lineage>
</organism>
<feature type="chain" id="PRO_0000296901" description="Putative DNA-directed RNA polymerase subunit alpha-like 1">
    <location>
        <begin position="1"/>
        <end position="574"/>
    </location>
</feature>
<feature type="region of interest" description="Alpha N-terminal domain (alpha-NTD)" evidence="1">
    <location>
        <begin position="1"/>
        <end position="352"/>
    </location>
</feature>
<feature type="region of interest" description="Alpha C-terminal domain (alpha-CTD)" evidence="1">
    <location>
        <begin position="419"/>
        <end position="574"/>
    </location>
</feature>
<feature type="region of interest" description="Disordered" evidence="2">
    <location>
        <begin position="534"/>
        <end position="574"/>
    </location>
</feature>
<feature type="compositionally biased region" description="Basic and acidic residues" evidence="2">
    <location>
        <begin position="551"/>
        <end position="574"/>
    </location>
</feature>
<evidence type="ECO:0000250" key="1"/>
<evidence type="ECO:0000256" key="2">
    <source>
        <dbReference type="SAM" id="MobiDB-lite"/>
    </source>
</evidence>
<evidence type="ECO:0000305" key="3"/>
<sequence>MTNNKNFADWDSLECKDLHNDLLYGRFALSPLTAKESRLLKKGLREALLTGILCLRFTHAKIQNACKNLNLMNIVGIQESLDEILKNFGKIILTGKLEEFVGKGPFVAILDVRGPLNAMAVDIELPPGIKVEIETQHIATITEPIPFVVELRIELVSSTSKGETGITDEEGFSIDPNPPIQKVNSSIQGYEYGGQTFQTLFIEILSTSPTVPNKALLLVSMKIMNLFQIVLQAKYLDYKELEKGIHVGVFCVSALRAEQSKWIKTILEDALYMVGGRKHQGPLTDEEDDSIDSNFTPVQNLDCRIESYEEEGQTFQRLFLEIWTKSPTEPQEALWEASAKILELFSLFLQTSKENEKDLKQIIKDWTENKRKHQEVLRLLDSEESGSIGWITKMKLAYMHMTLLSMNAMYILLVHRLKPDYDRYNSITDQIVQELRASLNKLREIQKGEYSEQRILVHSIAQEIEAALQKYETTYKLDDFVIKAKKDMITMIWDKERADLESSLIRWESDEDYLNLKKMNPVEMDRSFAELQYQETLRKEQDEQSSQQQKDQMEKRRWERQNRERERKRGNREF</sequence>
<gene>
    <name type="primary">rpoAL1-A</name>
    <name type="synonym">ORF574</name>
</gene>
<gene>
    <name type="primary">rpoAL1-B</name>
    <name type="synonym">ORF574</name>
</gene>
<reference key="1">
    <citation type="journal article" date="2006" name="Mol. Biol. Evol.">
        <title>The complete chloroplast genome sequence of Pelargonium x hortorum: organization and evolution of the largest and most highly rearranged chloroplast genome of land plants.</title>
        <authorList>
            <person name="Chumley T.W."/>
            <person name="Palmer J.D."/>
            <person name="Mower J.P."/>
            <person name="Fourcade H.M."/>
            <person name="Calie P.J."/>
            <person name="Boore J.L."/>
            <person name="Jansen R.K."/>
        </authorList>
    </citation>
    <scope>NUCLEOTIDE SEQUENCE [LARGE SCALE GENOMIC DNA]</scope>
    <source>
        <strain>cv. Ringo White</strain>
    </source>
</reference>